<reference key="1">
    <citation type="submission" date="2007-08" db="EMBL/GenBank/DDBJ databases">
        <authorList>
            <consortium name="The Vibrio harveyi Genome Sequencing Project"/>
            <person name="Bassler B."/>
            <person name="Clifton S.W."/>
            <person name="Fulton L."/>
            <person name="Delehaunty K."/>
            <person name="Fronick C."/>
            <person name="Harrison M."/>
            <person name="Markivic C."/>
            <person name="Fulton R."/>
            <person name="Tin-Wollam A.-M."/>
            <person name="Shah N."/>
            <person name="Pepin K."/>
            <person name="Nash W."/>
            <person name="Thiruvilangam P."/>
            <person name="Bhonagiri V."/>
            <person name="Waters C."/>
            <person name="Tu K.C."/>
            <person name="Irgon J."/>
            <person name="Wilson R.K."/>
        </authorList>
    </citation>
    <scope>NUCLEOTIDE SEQUENCE [LARGE SCALE GENOMIC DNA]</scope>
    <source>
        <strain>ATCC BAA-1116 / BB120</strain>
    </source>
</reference>
<name>CYAY_VIBC1</name>
<feature type="chain" id="PRO_1000010965" description="Iron-sulfur cluster assembly protein CyaY">
    <location>
        <begin position="1"/>
        <end position="104"/>
    </location>
</feature>
<keyword id="KW-0408">Iron</keyword>
<keyword id="KW-0479">Metal-binding</keyword>
<organism>
    <name type="scientific">Vibrio campbellii (strain ATCC BAA-1116)</name>
    <dbReference type="NCBI Taxonomy" id="2902295"/>
    <lineage>
        <taxon>Bacteria</taxon>
        <taxon>Pseudomonadati</taxon>
        <taxon>Pseudomonadota</taxon>
        <taxon>Gammaproteobacteria</taxon>
        <taxon>Vibrionales</taxon>
        <taxon>Vibrionaceae</taxon>
        <taxon>Vibrio</taxon>
    </lineage>
</organism>
<accession>A7N0W3</accession>
<comment type="function">
    <text evidence="1">Involved in iron-sulfur (Fe-S) cluster assembly. May act as a regulator of Fe-S biogenesis.</text>
</comment>
<comment type="similarity">
    <text evidence="1">Belongs to the frataxin family.</text>
</comment>
<gene>
    <name evidence="1" type="primary">cyaY</name>
    <name type="ordered locus">VIBHAR_00312</name>
</gene>
<proteinExistence type="inferred from homology"/>
<sequence length="104" mass="11951">MNDTEFHQLVDAQMQLIEESIDDSGADIDYEVTGNVMTLEFEDRSQIIINRQEPMHEIWLASKSGGFHFKLVDNKWTCSKTGMELIAMVKEECEKHAGETIDWA</sequence>
<evidence type="ECO:0000255" key="1">
    <source>
        <dbReference type="HAMAP-Rule" id="MF_00142"/>
    </source>
</evidence>
<dbReference type="EMBL" id="CP000789">
    <property type="protein sequence ID" value="ABU69340.1"/>
    <property type="molecule type" value="Genomic_DNA"/>
</dbReference>
<dbReference type="RefSeq" id="WP_012126595.1">
    <property type="nucleotide sequence ID" value="NC_009783.1"/>
</dbReference>
<dbReference type="SMR" id="A7N0W3"/>
<dbReference type="KEGG" id="vha:VIBHAR_00312"/>
<dbReference type="PATRIC" id="fig|338187.25.peg.2257"/>
<dbReference type="Proteomes" id="UP000008152">
    <property type="component" value="Chromosome I"/>
</dbReference>
<dbReference type="GO" id="GO:0005829">
    <property type="term" value="C:cytosol"/>
    <property type="evidence" value="ECO:0007669"/>
    <property type="project" value="TreeGrafter"/>
</dbReference>
<dbReference type="GO" id="GO:0008199">
    <property type="term" value="F:ferric iron binding"/>
    <property type="evidence" value="ECO:0007669"/>
    <property type="project" value="InterPro"/>
</dbReference>
<dbReference type="GO" id="GO:0008198">
    <property type="term" value="F:ferrous iron binding"/>
    <property type="evidence" value="ECO:0007669"/>
    <property type="project" value="TreeGrafter"/>
</dbReference>
<dbReference type="GO" id="GO:0016226">
    <property type="term" value="P:iron-sulfur cluster assembly"/>
    <property type="evidence" value="ECO:0007669"/>
    <property type="project" value="UniProtKB-UniRule"/>
</dbReference>
<dbReference type="CDD" id="cd00503">
    <property type="entry name" value="Frataxin"/>
    <property type="match status" value="1"/>
</dbReference>
<dbReference type="Gene3D" id="3.30.920.10">
    <property type="entry name" value="Frataxin/CyaY"/>
    <property type="match status" value="1"/>
</dbReference>
<dbReference type="HAMAP" id="MF_00142">
    <property type="entry name" value="CyaY"/>
    <property type="match status" value="1"/>
</dbReference>
<dbReference type="InterPro" id="IPR047584">
    <property type="entry name" value="CyaY"/>
</dbReference>
<dbReference type="InterPro" id="IPR002908">
    <property type="entry name" value="Frataxin/CyaY"/>
</dbReference>
<dbReference type="InterPro" id="IPR036524">
    <property type="entry name" value="Frataxin/CyaY_sf"/>
</dbReference>
<dbReference type="InterPro" id="IPR020895">
    <property type="entry name" value="Frataxin_CS"/>
</dbReference>
<dbReference type="NCBIfam" id="TIGR03421">
    <property type="entry name" value="FeS_CyaY"/>
    <property type="match status" value="1"/>
</dbReference>
<dbReference type="PANTHER" id="PTHR16821">
    <property type="entry name" value="FRATAXIN"/>
    <property type="match status" value="1"/>
</dbReference>
<dbReference type="PANTHER" id="PTHR16821:SF2">
    <property type="entry name" value="FRATAXIN, MITOCHONDRIAL"/>
    <property type="match status" value="1"/>
</dbReference>
<dbReference type="Pfam" id="PF01491">
    <property type="entry name" value="Frataxin_Cyay"/>
    <property type="match status" value="1"/>
</dbReference>
<dbReference type="SMART" id="SM01219">
    <property type="entry name" value="Frataxin_Cyay"/>
    <property type="match status" value="1"/>
</dbReference>
<dbReference type="SUPFAM" id="SSF55387">
    <property type="entry name" value="Frataxin/Nqo15-like"/>
    <property type="match status" value="1"/>
</dbReference>
<dbReference type="PROSITE" id="PS01344">
    <property type="entry name" value="FRATAXIN_1"/>
    <property type="match status" value="1"/>
</dbReference>
<dbReference type="PROSITE" id="PS50810">
    <property type="entry name" value="FRATAXIN_2"/>
    <property type="match status" value="1"/>
</dbReference>
<protein>
    <recommendedName>
        <fullName evidence="1">Iron-sulfur cluster assembly protein CyaY</fullName>
    </recommendedName>
</protein>